<feature type="signal peptide" evidence="1">
    <location>
        <begin position="1"/>
        <end position="31"/>
    </location>
</feature>
<feature type="chain" id="PRO_0000227752" description="NT-3 growth factor receptor">
    <location>
        <begin position="32"/>
        <end position="825"/>
    </location>
</feature>
<feature type="topological domain" description="Extracellular" evidence="7">
    <location>
        <begin position="32"/>
        <end position="429"/>
    </location>
</feature>
<feature type="transmembrane region" description="Helical" evidence="7">
    <location>
        <begin position="430"/>
        <end position="453"/>
    </location>
</feature>
<feature type="topological domain" description="Cytoplasmic" evidence="7">
    <location>
        <begin position="454"/>
        <end position="825"/>
    </location>
</feature>
<feature type="repeat" description="LRR 1">
    <location>
        <begin position="104"/>
        <end position="125"/>
    </location>
</feature>
<feature type="repeat" description="LRR 2">
    <location>
        <begin position="128"/>
        <end position="149"/>
    </location>
</feature>
<feature type="domain" description="LRRCT">
    <location>
        <begin position="160"/>
        <end position="209"/>
    </location>
</feature>
<feature type="domain" description="Ig-like C2-type 1">
    <location>
        <begin position="210"/>
        <end position="300"/>
    </location>
</feature>
<feature type="domain" description="Ig-like C2-type 2">
    <location>
        <begin position="309"/>
        <end position="382"/>
    </location>
</feature>
<feature type="domain" description="Protein kinase" evidence="9">
    <location>
        <begin position="538"/>
        <end position="825"/>
    </location>
</feature>
<feature type="active site" description="Proton acceptor" evidence="9 10">
    <location>
        <position position="679"/>
    </location>
</feature>
<feature type="binding site" evidence="9">
    <location>
        <begin position="544"/>
        <end position="552"/>
    </location>
    <ligand>
        <name>ATP</name>
        <dbReference type="ChEBI" id="CHEBI:30616"/>
    </ligand>
</feature>
<feature type="binding site" evidence="9">
    <location>
        <position position="572"/>
    </location>
    <ligand>
        <name>ATP</name>
        <dbReference type="ChEBI" id="CHEBI:30616"/>
    </ligand>
</feature>
<feature type="site" description="Interaction with SHC1" evidence="1">
    <location>
        <position position="516"/>
    </location>
</feature>
<feature type="site" description="Interaction with PLC-gamma-1" evidence="1">
    <location>
        <position position="820"/>
    </location>
</feature>
<feature type="modified residue" description="Phosphoserine" evidence="5">
    <location>
        <position position="493"/>
    </location>
</feature>
<feature type="modified residue" description="Phosphotyrosine; by autocatalysis" evidence="4">
    <location>
        <position position="516"/>
    </location>
</feature>
<feature type="modified residue" description="Phosphotyrosine; by autocatalysis" evidence="1">
    <location>
        <position position="705"/>
    </location>
</feature>
<feature type="modified residue" description="Phosphotyrosine; by autocatalysis" evidence="1">
    <location>
        <position position="709"/>
    </location>
</feature>
<feature type="modified residue" description="Phosphotyrosine; by autocatalysis" evidence="1">
    <location>
        <position position="710"/>
    </location>
</feature>
<feature type="glycosylation site" description="N-linked (GlcNAc...) asparagine" evidence="7">
    <location>
        <position position="68"/>
    </location>
</feature>
<feature type="glycosylation site" description="N-linked (GlcNAc...) asparagine" evidence="7">
    <location>
        <position position="72"/>
    </location>
</feature>
<feature type="glycosylation site" description="N-linked (GlcNAc...) asparagine" evidence="7">
    <location>
        <position position="79"/>
    </location>
</feature>
<feature type="glycosylation site" description="N-linked (GlcNAc...) asparagine" evidence="7">
    <location>
        <position position="133"/>
    </location>
</feature>
<feature type="glycosylation site" description="N-linked (GlcNAc...) asparagine" evidence="7">
    <location>
        <position position="163"/>
    </location>
</feature>
<feature type="glycosylation site" description="N-linked (GlcNAc...) asparagine" evidence="7">
    <location>
        <position position="203"/>
    </location>
</feature>
<feature type="glycosylation site" description="N-linked (GlcNAc...) asparagine" evidence="7">
    <location>
        <position position="218"/>
    </location>
</feature>
<feature type="glycosylation site" description="N-linked (GlcNAc...) asparagine" evidence="7">
    <location>
        <position position="232"/>
    </location>
</feature>
<feature type="glycosylation site" description="N-linked (GlcNAc...) asparagine" evidence="7">
    <location>
        <position position="259"/>
    </location>
</feature>
<feature type="glycosylation site" description="N-linked (GlcNAc...) asparagine" evidence="7">
    <location>
        <position position="267"/>
    </location>
</feature>
<feature type="glycosylation site" description="N-linked (GlcNAc...) asparagine" evidence="7">
    <location>
        <position position="272"/>
    </location>
</feature>
<feature type="glycosylation site" description="N-linked (GlcNAc...) asparagine" evidence="7">
    <location>
        <position position="294"/>
    </location>
</feature>
<feature type="glycosylation site" description="N-linked (GlcNAc...) asparagine" evidence="7">
    <location>
        <position position="375"/>
    </location>
</feature>
<feature type="glycosylation site" description="N-linked (GlcNAc...) asparagine" evidence="7">
    <location>
        <position position="388"/>
    </location>
</feature>
<feature type="disulfide bond" evidence="6">
    <location>
        <begin position="32"/>
        <end position="38"/>
    </location>
</feature>
<feature type="disulfide bond" evidence="6">
    <location>
        <begin position="36"/>
        <end position="45"/>
    </location>
</feature>
<feature type="disulfide bond" evidence="6">
    <location>
        <begin position="164"/>
        <end position="189"/>
    </location>
</feature>
<feature type="disulfide bond" evidence="6">
    <location>
        <begin position="166"/>
        <end position="207"/>
    </location>
</feature>
<feature type="disulfide bond" evidence="6">
    <location>
        <begin position="231"/>
        <end position="284"/>
    </location>
</feature>
<feature type="disulfide bond" evidence="8">
    <location>
        <begin position="320"/>
        <end position="362"/>
    </location>
</feature>
<gene>
    <name type="primary">NTRK3</name>
</gene>
<accession>Q5IS82</accession>
<dbReference type="EC" id="2.7.10.1"/>
<dbReference type="EMBL" id="AY665246">
    <property type="protein sequence ID" value="AAV74284.1"/>
    <property type="molecule type" value="mRNA"/>
</dbReference>
<dbReference type="RefSeq" id="NP_001266902.1">
    <property type="nucleotide sequence ID" value="NM_001279973.1"/>
</dbReference>
<dbReference type="STRING" id="39432.ENSSBOP00000028586"/>
<dbReference type="GlyCosmos" id="Q5IS82">
    <property type="glycosylation" value="14 sites, No reported glycans"/>
</dbReference>
<dbReference type="GeneID" id="101048153"/>
<dbReference type="CTD" id="4916"/>
<dbReference type="Proteomes" id="UP000233220">
    <property type="component" value="Whole Genome Shotgun Assembly"/>
</dbReference>
<dbReference type="GO" id="GO:0030424">
    <property type="term" value="C:axon"/>
    <property type="evidence" value="ECO:0007669"/>
    <property type="project" value="TreeGrafter"/>
</dbReference>
<dbReference type="GO" id="GO:0005886">
    <property type="term" value="C:plasma membrane"/>
    <property type="evidence" value="ECO:0007669"/>
    <property type="project" value="InterPro"/>
</dbReference>
<dbReference type="GO" id="GO:0043235">
    <property type="term" value="C:receptor complex"/>
    <property type="evidence" value="ECO:0007669"/>
    <property type="project" value="TreeGrafter"/>
</dbReference>
<dbReference type="GO" id="GO:0005524">
    <property type="term" value="F:ATP binding"/>
    <property type="evidence" value="ECO:0007669"/>
    <property type="project" value="UniProtKB-KW"/>
</dbReference>
<dbReference type="GO" id="GO:0043121">
    <property type="term" value="F:neurotrophin binding"/>
    <property type="evidence" value="ECO:0007669"/>
    <property type="project" value="TreeGrafter"/>
</dbReference>
<dbReference type="GO" id="GO:0005030">
    <property type="term" value="F:neurotrophin receptor activity"/>
    <property type="evidence" value="ECO:0007669"/>
    <property type="project" value="InterPro"/>
</dbReference>
<dbReference type="GO" id="GO:0004714">
    <property type="term" value="F:transmembrane receptor protein tyrosine kinase activity"/>
    <property type="evidence" value="ECO:0007669"/>
    <property type="project" value="UniProtKB-EC"/>
</dbReference>
<dbReference type="GO" id="GO:0030154">
    <property type="term" value="P:cell differentiation"/>
    <property type="evidence" value="ECO:0007669"/>
    <property type="project" value="UniProtKB-KW"/>
</dbReference>
<dbReference type="GO" id="GO:0007169">
    <property type="term" value="P:cell surface receptor protein tyrosine kinase signaling pathway"/>
    <property type="evidence" value="ECO:0007669"/>
    <property type="project" value="InterPro"/>
</dbReference>
<dbReference type="GO" id="GO:1990090">
    <property type="term" value="P:cellular response to nerve growth factor stimulus"/>
    <property type="evidence" value="ECO:0007669"/>
    <property type="project" value="TreeGrafter"/>
</dbReference>
<dbReference type="GO" id="GO:0007399">
    <property type="term" value="P:nervous system development"/>
    <property type="evidence" value="ECO:0007669"/>
    <property type="project" value="UniProtKB-KW"/>
</dbReference>
<dbReference type="GO" id="GO:0010976">
    <property type="term" value="P:positive regulation of neuron projection development"/>
    <property type="evidence" value="ECO:0007669"/>
    <property type="project" value="TreeGrafter"/>
</dbReference>
<dbReference type="GO" id="GO:0051897">
    <property type="term" value="P:positive regulation of phosphatidylinositol 3-kinase/protein kinase B signal transduction"/>
    <property type="evidence" value="ECO:0007669"/>
    <property type="project" value="TreeGrafter"/>
</dbReference>
<dbReference type="CDD" id="cd04971">
    <property type="entry name" value="IgI_TrKABC_d5"/>
    <property type="match status" value="1"/>
</dbReference>
<dbReference type="CDD" id="cd05094">
    <property type="entry name" value="PTKc_TrkC"/>
    <property type="match status" value="1"/>
</dbReference>
<dbReference type="FunFam" id="1.10.510.10:FF:000701">
    <property type="entry name" value="Tyrosine-protein kinase receptor"/>
    <property type="match status" value="1"/>
</dbReference>
<dbReference type="FunFam" id="2.60.40.10:FF:000251">
    <property type="entry name" value="Tyrosine-protein kinase receptor"/>
    <property type="match status" value="1"/>
</dbReference>
<dbReference type="FunFam" id="2.60.40.10:FF:000265">
    <property type="entry name" value="Tyrosine-protein kinase receptor"/>
    <property type="match status" value="1"/>
</dbReference>
<dbReference type="FunFam" id="3.30.200.20:FF:000033">
    <property type="entry name" value="Tyrosine-protein kinase receptor"/>
    <property type="match status" value="1"/>
</dbReference>
<dbReference type="FunFam" id="3.80.10.10:FF:000035">
    <property type="entry name" value="Tyrosine-protein kinase receptor"/>
    <property type="match status" value="1"/>
</dbReference>
<dbReference type="Gene3D" id="2.60.40.10">
    <property type="entry name" value="Immunoglobulins"/>
    <property type="match status" value="2"/>
</dbReference>
<dbReference type="Gene3D" id="3.30.200.20">
    <property type="entry name" value="Phosphorylase Kinase, domain 1"/>
    <property type="match status" value="1"/>
</dbReference>
<dbReference type="Gene3D" id="3.80.10.10">
    <property type="entry name" value="Ribonuclease Inhibitor"/>
    <property type="match status" value="1"/>
</dbReference>
<dbReference type="Gene3D" id="1.10.510.10">
    <property type="entry name" value="Transferase(Phosphotransferase) domain 1"/>
    <property type="match status" value="1"/>
</dbReference>
<dbReference type="InterPro" id="IPR000483">
    <property type="entry name" value="Cys-rich_flank_reg_C"/>
</dbReference>
<dbReference type="InterPro" id="IPR007110">
    <property type="entry name" value="Ig-like_dom"/>
</dbReference>
<dbReference type="InterPro" id="IPR036179">
    <property type="entry name" value="Ig-like_dom_sf"/>
</dbReference>
<dbReference type="InterPro" id="IPR013783">
    <property type="entry name" value="Ig-like_fold"/>
</dbReference>
<dbReference type="InterPro" id="IPR013098">
    <property type="entry name" value="Ig_I-set"/>
</dbReference>
<dbReference type="InterPro" id="IPR003599">
    <property type="entry name" value="Ig_sub"/>
</dbReference>
<dbReference type="InterPro" id="IPR013151">
    <property type="entry name" value="Immunoglobulin_dom"/>
</dbReference>
<dbReference type="InterPro" id="IPR011009">
    <property type="entry name" value="Kinase-like_dom_sf"/>
</dbReference>
<dbReference type="InterPro" id="IPR001611">
    <property type="entry name" value="Leu-rich_rpt"/>
</dbReference>
<dbReference type="InterPro" id="IPR032675">
    <property type="entry name" value="LRR_dom_sf"/>
</dbReference>
<dbReference type="InterPro" id="IPR000372">
    <property type="entry name" value="LRRNT"/>
</dbReference>
<dbReference type="InterPro" id="IPR020777">
    <property type="entry name" value="NTRK"/>
</dbReference>
<dbReference type="InterPro" id="IPR020446">
    <property type="entry name" value="NTRK3"/>
</dbReference>
<dbReference type="InterPro" id="IPR031635">
    <property type="entry name" value="NTRK_LRRCT"/>
</dbReference>
<dbReference type="InterPro" id="IPR000719">
    <property type="entry name" value="Prot_kinase_dom"/>
</dbReference>
<dbReference type="InterPro" id="IPR017441">
    <property type="entry name" value="Protein_kinase_ATP_BS"/>
</dbReference>
<dbReference type="InterPro" id="IPR050122">
    <property type="entry name" value="RTK"/>
</dbReference>
<dbReference type="InterPro" id="IPR001245">
    <property type="entry name" value="Ser-Thr/Tyr_kinase_cat_dom"/>
</dbReference>
<dbReference type="InterPro" id="IPR020635">
    <property type="entry name" value="Tyr_kinase_cat_dom"/>
</dbReference>
<dbReference type="InterPro" id="IPR002011">
    <property type="entry name" value="Tyr_kinase_rcpt_2_CS"/>
</dbReference>
<dbReference type="PANTHER" id="PTHR24416:SF66">
    <property type="entry name" value="NT-3 GROWTH FACTOR RECEPTOR"/>
    <property type="match status" value="1"/>
</dbReference>
<dbReference type="PANTHER" id="PTHR24416">
    <property type="entry name" value="TYROSINE-PROTEIN KINASE RECEPTOR"/>
    <property type="match status" value="1"/>
</dbReference>
<dbReference type="Pfam" id="PF07679">
    <property type="entry name" value="I-set"/>
    <property type="match status" value="1"/>
</dbReference>
<dbReference type="Pfam" id="PF00047">
    <property type="entry name" value="ig"/>
    <property type="match status" value="1"/>
</dbReference>
<dbReference type="Pfam" id="PF13855">
    <property type="entry name" value="LRR_8"/>
    <property type="match status" value="1"/>
</dbReference>
<dbReference type="Pfam" id="PF16920">
    <property type="entry name" value="LRRCT_2"/>
    <property type="match status" value="1"/>
</dbReference>
<dbReference type="Pfam" id="PF01462">
    <property type="entry name" value="LRRNT"/>
    <property type="match status" value="1"/>
</dbReference>
<dbReference type="Pfam" id="PF07714">
    <property type="entry name" value="PK_Tyr_Ser-Thr"/>
    <property type="match status" value="1"/>
</dbReference>
<dbReference type="PRINTS" id="PR01939">
    <property type="entry name" value="NTKRECEPTOR"/>
</dbReference>
<dbReference type="PRINTS" id="PR01942">
    <property type="entry name" value="NTKRECEPTOR3"/>
</dbReference>
<dbReference type="PRINTS" id="PR00109">
    <property type="entry name" value="TYRKINASE"/>
</dbReference>
<dbReference type="SMART" id="SM00409">
    <property type="entry name" value="IG"/>
    <property type="match status" value="1"/>
</dbReference>
<dbReference type="SMART" id="SM00082">
    <property type="entry name" value="LRRCT"/>
    <property type="match status" value="1"/>
</dbReference>
<dbReference type="SMART" id="SM00013">
    <property type="entry name" value="LRRNT"/>
    <property type="match status" value="1"/>
</dbReference>
<dbReference type="SMART" id="SM00219">
    <property type="entry name" value="TyrKc"/>
    <property type="match status" value="1"/>
</dbReference>
<dbReference type="SUPFAM" id="SSF48726">
    <property type="entry name" value="Immunoglobulin"/>
    <property type="match status" value="2"/>
</dbReference>
<dbReference type="SUPFAM" id="SSF52058">
    <property type="entry name" value="L domain-like"/>
    <property type="match status" value="1"/>
</dbReference>
<dbReference type="SUPFAM" id="SSF56112">
    <property type="entry name" value="Protein kinase-like (PK-like)"/>
    <property type="match status" value="1"/>
</dbReference>
<dbReference type="PROSITE" id="PS50835">
    <property type="entry name" value="IG_LIKE"/>
    <property type="match status" value="1"/>
</dbReference>
<dbReference type="PROSITE" id="PS51450">
    <property type="entry name" value="LRR"/>
    <property type="match status" value="1"/>
</dbReference>
<dbReference type="PROSITE" id="PS00107">
    <property type="entry name" value="PROTEIN_KINASE_ATP"/>
    <property type="match status" value="1"/>
</dbReference>
<dbReference type="PROSITE" id="PS50011">
    <property type="entry name" value="PROTEIN_KINASE_DOM"/>
    <property type="match status" value="1"/>
</dbReference>
<dbReference type="PROSITE" id="PS00109">
    <property type="entry name" value="PROTEIN_KINASE_TYR"/>
    <property type="match status" value="1"/>
</dbReference>
<dbReference type="PROSITE" id="PS00239">
    <property type="entry name" value="RECEPTOR_TYR_KIN_II"/>
    <property type="match status" value="1"/>
</dbReference>
<name>NTRK3_SAIBB</name>
<reference key="1">
    <citation type="journal article" date="2004" name="Cell">
        <title>Accelerated evolution of nervous system genes in the origin of Homo sapiens.</title>
        <authorList>
            <person name="Dorus S."/>
            <person name="Vallender E.J."/>
            <person name="Evans P.D."/>
            <person name="Anderson J.R."/>
            <person name="Gilbert S.L."/>
            <person name="Mahowald M."/>
            <person name="Wyckoff G.J."/>
            <person name="Malcom C.M."/>
            <person name="Lahn B.T."/>
        </authorList>
    </citation>
    <scope>NUCLEOTIDE SEQUENCE [MRNA]</scope>
</reference>
<organism>
    <name type="scientific">Saimiri boliviensis boliviensis</name>
    <name type="common">Bolivian squirrel monkey</name>
    <dbReference type="NCBI Taxonomy" id="39432"/>
    <lineage>
        <taxon>Eukaryota</taxon>
        <taxon>Metazoa</taxon>
        <taxon>Chordata</taxon>
        <taxon>Craniata</taxon>
        <taxon>Vertebrata</taxon>
        <taxon>Euteleostomi</taxon>
        <taxon>Mammalia</taxon>
        <taxon>Eutheria</taxon>
        <taxon>Euarchontoglires</taxon>
        <taxon>Primates</taxon>
        <taxon>Haplorrhini</taxon>
        <taxon>Platyrrhini</taxon>
        <taxon>Cebidae</taxon>
        <taxon>Saimiriinae</taxon>
        <taxon>Saimiri</taxon>
    </lineage>
</organism>
<comment type="function">
    <text evidence="4">Receptor tyrosine kinase involved in nervous system and probably heart development. Upon binding of its ligand NTF3/neurotrophin-3, NTRK3 autophosphorylates and activates different signaling pathways, including the phosphatidylinositol 3-kinase/AKT and the MAPK pathways, that control cell survival and differentiation.</text>
</comment>
<comment type="catalytic activity">
    <reaction evidence="10">
        <text>L-tyrosyl-[protein] + ATP = O-phospho-L-tyrosyl-[protein] + ADP + H(+)</text>
        <dbReference type="Rhea" id="RHEA:10596"/>
        <dbReference type="Rhea" id="RHEA-COMP:10136"/>
        <dbReference type="Rhea" id="RHEA-COMP:20101"/>
        <dbReference type="ChEBI" id="CHEBI:15378"/>
        <dbReference type="ChEBI" id="CHEBI:30616"/>
        <dbReference type="ChEBI" id="CHEBI:46858"/>
        <dbReference type="ChEBI" id="CHEBI:61978"/>
        <dbReference type="ChEBI" id="CHEBI:456216"/>
        <dbReference type="EC" id="2.7.10.1"/>
    </reaction>
</comment>
<comment type="subunit">
    <text evidence="2 3">Exists in a dynamic equilibrium between monomeric (low affinity) and dimeric (high affinity) structures (By similarity). Binds SH2B2. Interacts with SQSTM1 and KIDINS220. Interacts with PTPRS (By similarity). Interacts with MAPK8IP3/JIP3 (By similarity).</text>
</comment>
<comment type="subcellular location">
    <subcellularLocation>
        <location evidence="1">Membrane</location>
        <topology evidence="1">Single-pass type I membrane protein</topology>
    </subcellularLocation>
</comment>
<comment type="PTM">
    <text evidence="1">Ligand-mediated auto-phosphorylation.</text>
</comment>
<comment type="similarity">
    <text evidence="9">Belongs to the protein kinase superfamily. Tyr protein kinase family. Insulin receptor subfamily.</text>
</comment>
<keyword id="KW-0067">ATP-binding</keyword>
<keyword id="KW-0217">Developmental protein</keyword>
<keyword id="KW-0221">Differentiation</keyword>
<keyword id="KW-1015">Disulfide bond</keyword>
<keyword id="KW-0325">Glycoprotein</keyword>
<keyword id="KW-0393">Immunoglobulin domain</keyword>
<keyword id="KW-0418">Kinase</keyword>
<keyword id="KW-0433">Leucine-rich repeat</keyword>
<keyword id="KW-0472">Membrane</keyword>
<keyword id="KW-0524">Neurogenesis</keyword>
<keyword id="KW-0547">Nucleotide-binding</keyword>
<keyword id="KW-0597">Phosphoprotein</keyword>
<keyword id="KW-0675">Receptor</keyword>
<keyword id="KW-1185">Reference proteome</keyword>
<keyword id="KW-0677">Repeat</keyword>
<keyword id="KW-0732">Signal</keyword>
<keyword id="KW-0808">Transferase</keyword>
<keyword id="KW-0812">Transmembrane</keyword>
<keyword id="KW-1133">Transmembrane helix</keyword>
<keyword id="KW-0829">Tyrosine-protein kinase</keyword>
<sequence length="825" mass="92824">MDVSLCPAKCSFWRIFLLGSVWLDYVGSVLACPANCVCSKTEINCRRPDDGNLFPLLEGQDSGNSNGNASINITDISRNITSIHIENWRSLHTLNAVDMELYTGLQKLTIKNSGLRSIQPRAFAKNPHLRYINLSSNRLTTLSWQLFQTLSLRELRLEQNFFNCSCDIRWMQLWQEQGEARLNSQNLYCINADGSQLPLFRMNISQCDLPEISVSHVNLTVREGDSAVITCNGSGSPLPDVDWIVTGLQSINTHQTNLNWTNVHAINLTLVNVTSEDNGFTLTCIAENVVGMSNASVALTVYYPPRVVSLEEPELRLEHCIEFVVRGNPPPTLYWLHNGQPLRESKIIHVEYYQEGEISEGCLLFNKPTHYNNGNYTLIAKNPLGTANQTINGHFLKEPFPESTDNFILFDEVSPTPPITVTHKPEEDTFGVSIAVGLAAFACVLLVVLFIMINKYGRRSKFGMKGPVAVISGEEDSASPLHHINHGITTPSSLDAGPDTVVIGMTRIPVIENPQYFRQGHNCHKPDTYVQHIKRRDIVLKRELGEGAFGKVFLAECYNLSPTKDKMLVAVKALKDPTLAARKDFQREAELLTNLQHEHIVKFYGVCGDGDPLIMVFEYMKHGDLNKFLRAHGPDAMILVDGQPXQAKGELGLSQMLHIASQIASGMVYLASQHFVHRDLATRNCXVGANLLVKIGDFGMSRDVYSTDYYRVGGHTMLPIRWMPPESIMYRKFTTESDVWSFGVILWEIFTYGKQPWFQLSNTEVIECITQGRVLERPRVCPKEVYDVMLGCWQREPQQRLNIKEIYKILHALGKATPIYLDILG</sequence>
<evidence type="ECO:0000250" key="1"/>
<evidence type="ECO:0000250" key="2">
    <source>
        <dbReference type="UniProtKB" id="P04629"/>
    </source>
</evidence>
<evidence type="ECO:0000250" key="3">
    <source>
        <dbReference type="UniProtKB" id="Q03351"/>
    </source>
</evidence>
<evidence type="ECO:0000250" key="4">
    <source>
        <dbReference type="UniProtKB" id="Q16288"/>
    </source>
</evidence>
<evidence type="ECO:0000250" key="5">
    <source>
        <dbReference type="UniProtKB" id="Q6VNS1"/>
    </source>
</evidence>
<evidence type="ECO:0000250" key="6">
    <source>
        <dbReference type="UniProtKB" id="Q91044"/>
    </source>
</evidence>
<evidence type="ECO:0000255" key="7"/>
<evidence type="ECO:0000255" key="8">
    <source>
        <dbReference type="PROSITE-ProRule" id="PRU00114"/>
    </source>
</evidence>
<evidence type="ECO:0000255" key="9">
    <source>
        <dbReference type="PROSITE-ProRule" id="PRU00159"/>
    </source>
</evidence>
<evidence type="ECO:0000255" key="10">
    <source>
        <dbReference type="PROSITE-ProRule" id="PRU10028"/>
    </source>
</evidence>
<proteinExistence type="evidence at transcript level"/>
<protein>
    <recommendedName>
        <fullName>NT-3 growth factor receptor</fullName>
        <ecNumber>2.7.10.1</ecNumber>
    </recommendedName>
    <alternativeName>
        <fullName>Neurotrophic tyrosine kinase receptor type 3</fullName>
    </alternativeName>
</protein>